<keyword id="KW-0963">Cytoplasm</keyword>
<keyword id="KW-0903">Direct protein sequencing</keyword>
<keyword id="KW-0479">Metal-binding</keyword>
<keyword id="KW-0520">NAD</keyword>
<keyword id="KW-0533">Nickel</keyword>
<keyword id="KW-0560">Oxidoreductase</keyword>
<keyword id="KW-0614">Plasmid</keyword>
<accession>P22661</accession>
<protein>
    <recommendedName>
        <fullName>NAD-reducing hydrogenase HoxS subunit beta</fullName>
        <ecNumber>1.12.1.2</ecNumber>
    </recommendedName>
</protein>
<proteinExistence type="evidence at protein level"/>
<geneLocation type="plasmid"/>
<feature type="chain" id="PRO_0000199720" description="NAD-reducing hydrogenase HoxS subunit beta">
    <location>
        <begin position="1"/>
        <end position="38" status="greater than"/>
    </location>
</feature>
<feature type="non-terminal residue">
    <location>
        <position position="38"/>
    </location>
</feature>
<organism>
    <name type="scientific">Rhodococcus opacus</name>
    <name type="common">Nocardia opaca</name>
    <dbReference type="NCBI Taxonomy" id="37919"/>
    <lineage>
        <taxon>Bacteria</taxon>
        <taxon>Bacillati</taxon>
        <taxon>Actinomycetota</taxon>
        <taxon>Actinomycetes</taxon>
        <taxon>Mycobacteriales</taxon>
        <taxon>Nocardiaceae</taxon>
        <taxon>Rhodococcus</taxon>
    </lineage>
</organism>
<comment type="catalytic activity">
    <reaction>
        <text>H2 + NAD(+) = NADH + H(+)</text>
        <dbReference type="Rhea" id="RHEA:24636"/>
        <dbReference type="ChEBI" id="CHEBI:15378"/>
        <dbReference type="ChEBI" id="CHEBI:18276"/>
        <dbReference type="ChEBI" id="CHEBI:57540"/>
        <dbReference type="ChEBI" id="CHEBI:57945"/>
        <dbReference type="EC" id="1.12.1.2"/>
    </reaction>
</comment>
<comment type="cofactor">
    <cofactor>
        <name>FMN</name>
        <dbReference type="ChEBI" id="CHEBI:58210"/>
    </cofactor>
</comment>
<comment type="cofactor">
    <cofactor>
        <name>Ni(2+)</name>
        <dbReference type="ChEBI" id="CHEBI:49786"/>
    </cofactor>
</comment>
<comment type="subunit">
    <text>Tetramer of an alpha and a gamma subunits (flavin-containing dimer), and a delta and a nickel-containing beta subunits (hydrogenase dimer).</text>
</comment>
<comment type="subcellular location">
    <subcellularLocation>
        <location>Cytoplasm</location>
    </subcellularLocation>
</comment>
<comment type="similarity">
    <text evidence="1">Belongs to the [NiFe]/[NiFeSe] hydrogenase large subunit family.</text>
</comment>
<evidence type="ECO:0000305" key="1"/>
<name>HOXH_RHOOP</name>
<dbReference type="EC" id="1.12.1.2"/>
<dbReference type="SMR" id="P22661"/>
<dbReference type="GO" id="GO:0005737">
    <property type="term" value="C:cytoplasm"/>
    <property type="evidence" value="ECO:0007669"/>
    <property type="project" value="UniProtKB-SubCell"/>
</dbReference>
<dbReference type="GO" id="GO:0047985">
    <property type="term" value="F:hydrogen dehydrogenase activity"/>
    <property type="evidence" value="ECO:0007669"/>
    <property type="project" value="UniProtKB-EC"/>
</dbReference>
<dbReference type="GO" id="GO:0046872">
    <property type="term" value="F:metal ion binding"/>
    <property type="evidence" value="ECO:0007669"/>
    <property type="project" value="UniProtKB-KW"/>
</dbReference>
<dbReference type="Gene3D" id="1.10.645.10">
    <property type="entry name" value="Cytochrome-c3 Hydrogenase, chain B"/>
    <property type="match status" value="1"/>
</dbReference>
<dbReference type="InterPro" id="IPR029014">
    <property type="entry name" value="NiFe-Hase_large"/>
</dbReference>
<dbReference type="SUPFAM" id="SSF56762">
    <property type="entry name" value="HydB/Nqo4-like"/>
    <property type="match status" value="1"/>
</dbReference>
<sequence>STKLVIDPVTRIEGHGKVTVHLDDNNNVVDAHLHVVEF</sequence>
<gene>
    <name type="primary">hoxH</name>
</gene>
<reference key="1">
    <citation type="journal article" date="1989" name="Eur. J. Biochem.">
        <title>Comparison of the NH2-terminal amino acid sequences of the four non-identical subunits of the NAD-linked hydrogenases from Nocardia opaca 1b and Alcaligenes eutrophus H16.</title>
        <authorList>
            <person name="Zaborosch C."/>
            <person name="Schneider K."/>
            <person name="Schlegel H.G."/>
            <person name="Kratzin H."/>
        </authorList>
    </citation>
    <scope>PROTEIN SEQUENCE</scope>
    <source>
        <strain>1B</strain>
    </source>
</reference>